<evidence type="ECO:0000250" key="1">
    <source>
        <dbReference type="UniProtKB" id="Q96EK5"/>
    </source>
</evidence>
<evidence type="ECO:0000255" key="2"/>
<evidence type="ECO:0000305" key="3"/>
<feature type="chain" id="PRO_0000334520" description="KIF-binding protein">
    <location>
        <begin position="1"/>
        <end position="600"/>
    </location>
</feature>
<feature type="coiled-coil region" evidence="2">
    <location>
        <begin position="384"/>
        <end position="434"/>
    </location>
</feature>
<organism>
    <name type="scientific">Drosophila melanogaster</name>
    <name type="common">Fruit fly</name>
    <dbReference type="NCBI Taxonomy" id="7227"/>
    <lineage>
        <taxon>Eukaryota</taxon>
        <taxon>Metazoa</taxon>
        <taxon>Ecdysozoa</taxon>
        <taxon>Arthropoda</taxon>
        <taxon>Hexapoda</taxon>
        <taxon>Insecta</taxon>
        <taxon>Pterygota</taxon>
        <taxon>Neoptera</taxon>
        <taxon>Endopterygota</taxon>
        <taxon>Diptera</taxon>
        <taxon>Brachycera</taxon>
        <taxon>Muscomorpha</taxon>
        <taxon>Ephydroidea</taxon>
        <taxon>Drosophilidae</taxon>
        <taxon>Drosophila</taxon>
        <taxon>Sophophora</taxon>
    </lineage>
</organism>
<dbReference type="EMBL" id="AE014134">
    <property type="protein sequence ID" value="AAF52187.1"/>
    <property type="molecule type" value="Genomic_DNA"/>
</dbReference>
<dbReference type="EMBL" id="BT011038">
    <property type="protein sequence ID" value="AAR30198.1"/>
    <property type="status" value="ALT_FRAME"/>
    <property type="molecule type" value="mRNA"/>
</dbReference>
<dbReference type="RefSeq" id="NP_608886.1">
    <property type="nucleotide sequence ID" value="NM_135042.3"/>
</dbReference>
<dbReference type="SMR" id="Q9VMX1"/>
<dbReference type="BioGRID" id="59898">
    <property type="interactions" value="2"/>
</dbReference>
<dbReference type="FunCoup" id="Q9VMX1">
    <property type="interactions" value="1954"/>
</dbReference>
<dbReference type="IntAct" id="Q9VMX1">
    <property type="interactions" value="3"/>
</dbReference>
<dbReference type="STRING" id="7227.FBpp0078634"/>
<dbReference type="PaxDb" id="7227-FBpp0078634"/>
<dbReference type="DNASU" id="33714"/>
<dbReference type="EnsemblMetazoa" id="FBtr0078995">
    <property type="protein sequence ID" value="FBpp0078634"/>
    <property type="gene ID" value="FBgn0031659"/>
</dbReference>
<dbReference type="GeneID" id="33714"/>
<dbReference type="KEGG" id="dme:Dmel_CG14043"/>
<dbReference type="UCSC" id="CG14043-RA">
    <property type="organism name" value="d. melanogaster"/>
</dbReference>
<dbReference type="AGR" id="FB:FBgn0031659"/>
<dbReference type="FlyBase" id="FBgn0031659">
    <property type="gene designation" value="CG14043"/>
</dbReference>
<dbReference type="VEuPathDB" id="VectorBase:FBgn0031659"/>
<dbReference type="eggNOG" id="ENOG502QPZT">
    <property type="taxonomic scope" value="Eukaryota"/>
</dbReference>
<dbReference type="GeneTree" id="ENSGT00390000013819"/>
<dbReference type="HOGENOM" id="CLU_019859_1_0_1"/>
<dbReference type="InParanoid" id="Q9VMX1"/>
<dbReference type="OMA" id="ICRECWY"/>
<dbReference type="OrthoDB" id="409897at2759"/>
<dbReference type="PhylomeDB" id="Q9VMX1"/>
<dbReference type="BioGRID-ORCS" id="33714">
    <property type="hits" value="0 hits in 1 CRISPR screen"/>
</dbReference>
<dbReference type="GenomeRNAi" id="33714"/>
<dbReference type="PRO" id="PR:Q9VMX1"/>
<dbReference type="Proteomes" id="UP000000803">
    <property type="component" value="Chromosome 2L"/>
</dbReference>
<dbReference type="Bgee" id="FBgn0031659">
    <property type="expression patterns" value="Expressed in early elongation stage spermatid (Drosophila) in testis and 75 other cell types or tissues"/>
</dbReference>
<dbReference type="ExpressionAtlas" id="Q9VMX1">
    <property type="expression patterns" value="baseline and differential"/>
</dbReference>
<dbReference type="GO" id="GO:0005856">
    <property type="term" value="C:cytoskeleton"/>
    <property type="evidence" value="ECO:0007669"/>
    <property type="project" value="UniProtKB-SubCell"/>
</dbReference>
<dbReference type="GO" id="GO:0005739">
    <property type="term" value="C:mitochondrion"/>
    <property type="evidence" value="ECO:0000250"/>
    <property type="project" value="UniProtKB"/>
</dbReference>
<dbReference type="GO" id="GO:0021952">
    <property type="term" value="P:central nervous system projection neuron axonogenesis"/>
    <property type="evidence" value="ECO:0000318"/>
    <property type="project" value="GO_Central"/>
</dbReference>
<dbReference type="GO" id="GO:0000226">
    <property type="term" value="P:microtubule cytoskeleton organization"/>
    <property type="evidence" value="ECO:0000318"/>
    <property type="project" value="GO_Central"/>
</dbReference>
<dbReference type="GO" id="GO:0047497">
    <property type="term" value="P:mitochondrion transport along microtubule"/>
    <property type="evidence" value="ECO:0000250"/>
    <property type="project" value="UniProtKB"/>
</dbReference>
<dbReference type="GO" id="GO:1990535">
    <property type="term" value="P:neuron projection maintenance"/>
    <property type="evidence" value="ECO:0000318"/>
    <property type="project" value="GO_Central"/>
</dbReference>
<dbReference type="Gene3D" id="1.25.40.10">
    <property type="entry name" value="Tetratricopeptide repeat domain"/>
    <property type="match status" value="1"/>
</dbReference>
<dbReference type="InterPro" id="IPR022083">
    <property type="entry name" value="KBP"/>
</dbReference>
<dbReference type="InterPro" id="IPR011990">
    <property type="entry name" value="TPR-like_helical_dom_sf"/>
</dbReference>
<dbReference type="PANTHER" id="PTHR46321:SF1">
    <property type="entry name" value="KIF-BINDING PROTEIN"/>
    <property type="match status" value="1"/>
</dbReference>
<dbReference type="PANTHER" id="PTHR46321">
    <property type="entry name" value="KIF1-BINDING PROTEIN"/>
    <property type="match status" value="1"/>
</dbReference>
<dbReference type="Pfam" id="PF12309">
    <property type="entry name" value="KBP_C"/>
    <property type="match status" value="1"/>
</dbReference>
<dbReference type="SUPFAM" id="SSF48452">
    <property type="entry name" value="TPR-like"/>
    <property type="match status" value="1"/>
</dbReference>
<accession>Q9VMX1</accession>
<accession>Q6NP90</accession>
<comment type="subcellular location">
    <subcellularLocation>
        <location evidence="1">Cytoplasm</location>
        <location evidence="1">Cytoskeleton</location>
    </subcellularLocation>
</comment>
<comment type="similarity">
    <text evidence="3">Belongs to the KIF-binding protein family.</text>
</comment>
<comment type="sequence caution" evidence="3">
    <conflict type="frameshift">
        <sequence resource="EMBL-CDS" id="AAR30198"/>
    </conflict>
</comment>
<keyword id="KW-0175">Coiled coil</keyword>
<keyword id="KW-0963">Cytoplasm</keyword>
<keyword id="KW-0206">Cytoskeleton</keyword>
<keyword id="KW-1185">Reference proteome</keyword>
<sequence length="600" mass="69685">MVIPKEILSDFKELYEKANRLVEEESRNDPPTDPFRSHYKARDVLIVLKKQLDDQLVSVQASEEDGGQDDRCYHSLLAFVCRDLGRIYIYTEEQAEGEKMLNRCLELVTPFKECPEGIIPFIGAINELSIVLASKEEYNKGLEILLEAEKIYEDFKASGLKPLAIQDVFNPPEEGQQSHEAGPKELESLYTLVSFYMAQMYGHLGEPEKSAKCCHRTLHRQLESKTYDPIDFALNTATLSQFYIGEKRFEEARHHLAAATLIMAEYEVHMLEPEMSEKQRQDVSETFKHRYADVARCWAKYGLYLMNTSKLRLMRDEDDEDAKNLEIVLRNMRLVEAEQSRFPGLDLTACENRISCEYCLTFDDAKLVFHFVNEWLDIAKDYYKAENEATEYSKIMQDYAEAYEHIAFFEENPENQAKMQKRRAKYLEDLLDLLDPIFYMKICRECWYGAGTAHAAVMDVRLDIIRATSTPAPEDIKKVNQSCMKAIKHFESYVKSYLVKPPSEEWRPNMDVEEQRHMLYAHFHIGRIYYKLISGHPLQQLEHLTSCHTYYQRFDAGCQLHKEAAETLQGEIGVVREMLQLLPLKINTIKARLNKAGLTA</sequence>
<name>KBP_DROME</name>
<reference key="1">
    <citation type="journal article" date="2000" name="Science">
        <title>The genome sequence of Drosophila melanogaster.</title>
        <authorList>
            <person name="Adams M.D."/>
            <person name="Celniker S.E."/>
            <person name="Holt R.A."/>
            <person name="Evans C.A."/>
            <person name="Gocayne J.D."/>
            <person name="Amanatides P.G."/>
            <person name="Scherer S.E."/>
            <person name="Li P.W."/>
            <person name="Hoskins R.A."/>
            <person name="Galle R.F."/>
            <person name="George R.A."/>
            <person name="Lewis S.E."/>
            <person name="Richards S."/>
            <person name="Ashburner M."/>
            <person name="Henderson S.N."/>
            <person name="Sutton G.G."/>
            <person name="Wortman J.R."/>
            <person name="Yandell M.D."/>
            <person name="Zhang Q."/>
            <person name="Chen L.X."/>
            <person name="Brandon R.C."/>
            <person name="Rogers Y.-H.C."/>
            <person name="Blazej R.G."/>
            <person name="Champe M."/>
            <person name="Pfeiffer B.D."/>
            <person name="Wan K.H."/>
            <person name="Doyle C."/>
            <person name="Baxter E.G."/>
            <person name="Helt G."/>
            <person name="Nelson C.R."/>
            <person name="Miklos G.L.G."/>
            <person name="Abril J.F."/>
            <person name="Agbayani A."/>
            <person name="An H.-J."/>
            <person name="Andrews-Pfannkoch C."/>
            <person name="Baldwin D."/>
            <person name="Ballew R.M."/>
            <person name="Basu A."/>
            <person name="Baxendale J."/>
            <person name="Bayraktaroglu L."/>
            <person name="Beasley E.M."/>
            <person name="Beeson K.Y."/>
            <person name="Benos P.V."/>
            <person name="Berman B.P."/>
            <person name="Bhandari D."/>
            <person name="Bolshakov S."/>
            <person name="Borkova D."/>
            <person name="Botchan M.R."/>
            <person name="Bouck J."/>
            <person name="Brokstein P."/>
            <person name="Brottier P."/>
            <person name="Burtis K.C."/>
            <person name="Busam D.A."/>
            <person name="Butler H."/>
            <person name="Cadieu E."/>
            <person name="Center A."/>
            <person name="Chandra I."/>
            <person name="Cherry J.M."/>
            <person name="Cawley S."/>
            <person name="Dahlke C."/>
            <person name="Davenport L.B."/>
            <person name="Davies P."/>
            <person name="de Pablos B."/>
            <person name="Delcher A."/>
            <person name="Deng Z."/>
            <person name="Mays A.D."/>
            <person name="Dew I."/>
            <person name="Dietz S.M."/>
            <person name="Dodson K."/>
            <person name="Doup L.E."/>
            <person name="Downes M."/>
            <person name="Dugan-Rocha S."/>
            <person name="Dunkov B.C."/>
            <person name="Dunn P."/>
            <person name="Durbin K.J."/>
            <person name="Evangelista C.C."/>
            <person name="Ferraz C."/>
            <person name="Ferriera S."/>
            <person name="Fleischmann W."/>
            <person name="Fosler C."/>
            <person name="Gabrielian A.E."/>
            <person name="Garg N.S."/>
            <person name="Gelbart W.M."/>
            <person name="Glasser K."/>
            <person name="Glodek A."/>
            <person name="Gong F."/>
            <person name="Gorrell J.H."/>
            <person name="Gu Z."/>
            <person name="Guan P."/>
            <person name="Harris M."/>
            <person name="Harris N.L."/>
            <person name="Harvey D.A."/>
            <person name="Heiman T.J."/>
            <person name="Hernandez J.R."/>
            <person name="Houck J."/>
            <person name="Hostin D."/>
            <person name="Houston K.A."/>
            <person name="Howland T.J."/>
            <person name="Wei M.-H."/>
            <person name="Ibegwam C."/>
            <person name="Jalali M."/>
            <person name="Kalush F."/>
            <person name="Karpen G.H."/>
            <person name="Ke Z."/>
            <person name="Kennison J.A."/>
            <person name="Ketchum K.A."/>
            <person name="Kimmel B.E."/>
            <person name="Kodira C.D."/>
            <person name="Kraft C.L."/>
            <person name="Kravitz S."/>
            <person name="Kulp D."/>
            <person name="Lai Z."/>
            <person name="Lasko P."/>
            <person name="Lei Y."/>
            <person name="Levitsky A.A."/>
            <person name="Li J.H."/>
            <person name="Li Z."/>
            <person name="Liang Y."/>
            <person name="Lin X."/>
            <person name="Liu X."/>
            <person name="Mattei B."/>
            <person name="McIntosh T.C."/>
            <person name="McLeod M.P."/>
            <person name="McPherson D."/>
            <person name="Merkulov G."/>
            <person name="Milshina N.V."/>
            <person name="Mobarry C."/>
            <person name="Morris J."/>
            <person name="Moshrefi A."/>
            <person name="Mount S.M."/>
            <person name="Moy M."/>
            <person name="Murphy B."/>
            <person name="Murphy L."/>
            <person name="Muzny D.M."/>
            <person name="Nelson D.L."/>
            <person name="Nelson D.R."/>
            <person name="Nelson K.A."/>
            <person name="Nixon K."/>
            <person name="Nusskern D.R."/>
            <person name="Pacleb J.M."/>
            <person name="Palazzolo M."/>
            <person name="Pittman G.S."/>
            <person name="Pan S."/>
            <person name="Pollard J."/>
            <person name="Puri V."/>
            <person name="Reese M.G."/>
            <person name="Reinert K."/>
            <person name="Remington K."/>
            <person name="Saunders R.D.C."/>
            <person name="Scheeler F."/>
            <person name="Shen H."/>
            <person name="Shue B.C."/>
            <person name="Siden-Kiamos I."/>
            <person name="Simpson M."/>
            <person name="Skupski M.P."/>
            <person name="Smith T.J."/>
            <person name="Spier E."/>
            <person name="Spradling A.C."/>
            <person name="Stapleton M."/>
            <person name="Strong R."/>
            <person name="Sun E."/>
            <person name="Svirskas R."/>
            <person name="Tector C."/>
            <person name="Turner R."/>
            <person name="Venter E."/>
            <person name="Wang A.H."/>
            <person name="Wang X."/>
            <person name="Wang Z.-Y."/>
            <person name="Wassarman D.A."/>
            <person name="Weinstock G.M."/>
            <person name="Weissenbach J."/>
            <person name="Williams S.M."/>
            <person name="Woodage T."/>
            <person name="Worley K.C."/>
            <person name="Wu D."/>
            <person name="Yang S."/>
            <person name="Yao Q.A."/>
            <person name="Ye J."/>
            <person name="Yeh R.-F."/>
            <person name="Zaveri J.S."/>
            <person name="Zhan M."/>
            <person name="Zhang G."/>
            <person name="Zhao Q."/>
            <person name="Zheng L."/>
            <person name="Zheng X.H."/>
            <person name="Zhong F.N."/>
            <person name="Zhong W."/>
            <person name="Zhou X."/>
            <person name="Zhu S.C."/>
            <person name="Zhu X."/>
            <person name="Smith H.O."/>
            <person name="Gibbs R.A."/>
            <person name="Myers E.W."/>
            <person name="Rubin G.M."/>
            <person name="Venter J.C."/>
        </authorList>
    </citation>
    <scope>NUCLEOTIDE SEQUENCE [LARGE SCALE GENOMIC DNA]</scope>
    <source>
        <strain>Berkeley</strain>
    </source>
</reference>
<reference key="2">
    <citation type="journal article" date="2002" name="Genome Biol.">
        <title>Annotation of the Drosophila melanogaster euchromatic genome: a systematic review.</title>
        <authorList>
            <person name="Misra S."/>
            <person name="Crosby M.A."/>
            <person name="Mungall C.J."/>
            <person name="Matthews B.B."/>
            <person name="Campbell K.S."/>
            <person name="Hradecky P."/>
            <person name="Huang Y."/>
            <person name="Kaminker J.S."/>
            <person name="Millburn G.H."/>
            <person name="Prochnik S.E."/>
            <person name="Smith C.D."/>
            <person name="Tupy J.L."/>
            <person name="Whitfield E.J."/>
            <person name="Bayraktaroglu L."/>
            <person name="Berman B.P."/>
            <person name="Bettencourt B.R."/>
            <person name="Celniker S.E."/>
            <person name="de Grey A.D.N.J."/>
            <person name="Drysdale R.A."/>
            <person name="Harris N.L."/>
            <person name="Richter J."/>
            <person name="Russo S."/>
            <person name="Schroeder A.J."/>
            <person name="Shu S.Q."/>
            <person name="Stapleton M."/>
            <person name="Yamada C."/>
            <person name="Ashburner M."/>
            <person name="Gelbart W.M."/>
            <person name="Rubin G.M."/>
            <person name="Lewis S.E."/>
        </authorList>
    </citation>
    <scope>GENOME REANNOTATION</scope>
    <source>
        <strain>Berkeley</strain>
    </source>
</reference>
<reference key="3">
    <citation type="journal article" date="2002" name="Genome Biol.">
        <title>A Drosophila full-length cDNA resource.</title>
        <authorList>
            <person name="Stapleton M."/>
            <person name="Carlson J.W."/>
            <person name="Brokstein P."/>
            <person name="Yu C."/>
            <person name="Champe M."/>
            <person name="George R.A."/>
            <person name="Guarin H."/>
            <person name="Kronmiller B."/>
            <person name="Pacleb J.M."/>
            <person name="Park S."/>
            <person name="Wan K.H."/>
            <person name="Rubin G.M."/>
            <person name="Celniker S.E."/>
        </authorList>
    </citation>
    <scope>NUCLEOTIDE SEQUENCE [LARGE SCALE MRNA]</scope>
    <source>
        <strain>Berkeley</strain>
        <tissue>Embryo</tissue>
    </source>
</reference>
<protein>
    <recommendedName>
        <fullName>KIF-binding protein</fullName>
    </recommendedName>
    <alternativeName>
        <fullName>Protein KBP</fullName>
    </alternativeName>
</protein>
<gene>
    <name type="ORF">CG14043</name>
</gene>
<proteinExistence type="evidence at transcript level"/>